<accession>P34106</accession>
<reference key="1">
    <citation type="journal article" date="1992" name="Plant Mol. Biol.">
        <title>Molecular cloning of an alanine aminotransferase from NAD-malic enzyme type C4 plant Panicum miliaceum.</title>
        <authorList>
            <person name="Son D."/>
            <person name="Sugiyama T."/>
        </authorList>
    </citation>
    <scope>NUCLEOTIDE SEQUENCE [MRNA]</scope>
    <scope>PROTEIN SEQUENCE OF 197-206 AND 308-317</scope>
    <source>
        <tissue>Leaf</tissue>
    </source>
</reference>
<comment type="function">
    <text>Transfer of C3 units between the cytosol of mesophyll and bundle sheath cells to maintain a nitrogen-carbon balance in the C4-dicarboxylic pathway.</text>
</comment>
<comment type="catalytic activity">
    <reaction>
        <text>L-alanine + 2-oxoglutarate = pyruvate + L-glutamate</text>
        <dbReference type="Rhea" id="RHEA:19453"/>
        <dbReference type="ChEBI" id="CHEBI:15361"/>
        <dbReference type="ChEBI" id="CHEBI:16810"/>
        <dbReference type="ChEBI" id="CHEBI:29985"/>
        <dbReference type="ChEBI" id="CHEBI:57972"/>
        <dbReference type="EC" id="2.6.1.2"/>
    </reaction>
</comment>
<comment type="cofactor">
    <cofactor>
        <name>pyridoxal 5'-phosphate</name>
        <dbReference type="ChEBI" id="CHEBI:597326"/>
    </cofactor>
</comment>
<comment type="pathway">
    <text>Photosynthesis; C4 acid pathway.</text>
</comment>
<comment type="pathway">
    <text>Amino-acid degradation; L-alanine degradation via transaminase pathway; pyruvate from L-alanine: step 1/1.</text>
</comment>
<comment type="subunit">
    <text evidence="1">Homodimer.</text>
</comment>
<comment type="tissue specificity">
    <text>Mesophyll and bundle sheath cells.</text>
</comment>
<comment type="induction">
    <text>By light.</text>
</comment>
<comment type="PTM">
    <text>The N-terminus is blocked.</text>
</comment>
<comment type="similarity">
    <text evidence="2">Belongs to the class-I pyridoxal-phosphate-dependent aminotransferase family. Alanine aminotransferase subfamily.</text>
</comment>
<dbReference type="EC" id="2.6.1.2"/>
<dbReference type="EMBL" id="X69421">
    <property type="protein sequence ID" value="CAA49199.1"/>
    <property type="molecule type" value="mRNA"/>
</dbReference>
<dbReference type="PIR" id="S28429">
    <property type="entry name" value="S28429"/>
</dbReference>
<dbReference type="SMR" id="P34106"/>
<dbReference type="BioCyc" id="MetaCyc:MONOMER-17674"/>
<dbReference type="SABIO-RK" id="P34106"/>
<dbReference type="UniPathway" id="UPA00322"/>
<dbReference type="UniPathway" id="UPA00528">
    <property type="reaction ID" value="UER00586"/>
</dbReference>
<dbReference type="GO" id="GO:0004021">
    <property type="term" value="F:L-alanine:2-oxoglutarate aminotransferase activity"/>
    <property type="evidence" value="ECO:0007669"/>
    <property type="project" value="UniProtKB-EC"/>
</dbReference>
<dbReference type="GO" id="GO:0030170">
    <property type="term" value="F:pyridoxal phosphate binding"/>
    <property type="evidence" value="ECO:0007669"/>
    <property type="project" value="InterPro"/>
</dbReference>
<dbReference type="GO" id="GO:0009058">
    <property type="term" value="P:biosynthetic process"/>
    <property type="evidence" value="ECO:0007669"/>
    <property type="project" value="InterPro"/>
</dbReference>
<dbReference type="GO" id="GO:0042853">
    <property type="term" value="P:L-alanine catabolic process"/>
    <property type="evidence" value="ECO:0007669"/>
    <property type="project" value="UniProtKB-UniPathway"/>
</dbReference>
<dbReference type="CDD" id="cd00609">
    <property type="entry name" value="AAT_like"/>
    <property type="match status" value="1"/>
</dbReference>
<dbReference type="FunFam" id="3.90.1150.10:FF:000140">
    <property type="entry name" value="alanine aminotransferase 1"/>
    <property type="match status" value="2"/>
</dbReference>
<dbReference type="FunFam" id="1.10.287.1970:FF:000001">
    <property type="entry name" value="Alanine aminotransferase 2"/>
    <property type="match status" value="1"/>
</dbReference>
<dbReference type="FunFam" id="3.40.640.10:FF:000012">
    <property type="entry name" value="alanine aminotransferase 2"/>
    <property type="match status" value="1"/>
</dbReference>
<dbReference type="Gene3D" id="1.10.287.1970">
    <property type="match status" value="1"/>
</dbReference>
<dbReference type="Gene3D" id="3.90.1150.10">
    <property type="entry name" value="Aspartate Aminotransferase, domain 1"/>
    <property type="match status" value="1"/>
</dbReference>
<dbReference type="Gene3D" id="3.40.640.10">
    <property type="entry name" value="Type I PLP-dependent aspartate aminotransferase-like (Major domain)"/>
    <property type="match status" value="1"/>
</dbReference>
<dbReference type="InterPro" id="IPR045088">
    <property type="entry name" value="ALAT1/2-like"/>
</dbReference>
<dbReference type="InterPro" id="IPR004839">
    <property type="entry name" value="Aminotransferase_I/II_large"/>
</dbReference>
<dbReference type="InterPro" id="IPR015424">
    <property type="entry name" value="PyrdxlP-dep_Trfase"/>
</dbReference>
<dbReference type="InterPro" id="IPR015421">
    <property type="entry name" value="PyrdxlP-dep_Trfase_major"/>
</dbReference>
<dbReference type="InterPro" id="IPR015422">
    <property type="entry name" value="PyrdxlP-dep_Trfase_small"/>
</dbReference>
<dbReference type="PANTHER" id="PTHR11751">
    <property type="entry name" value="ALANINE AMINOTRANSFERASE"/>
    <property type="match status" value="1"/>
</dbReference>
<dbReference type="PANTHER" id="PTHR11751:SF479">
    <property type="entry name" value="ALANINE TRANSAMINASE"/>
    <property type="match status" value="1"/>
</dbReference>
<dbReference type="Pfam" id="PF00155">
    <property type="entry name" value="Aminotran_1_2"/>
    <property type="match status" value="1"/>
</dbReference>
<dbReference type="SUPFAM" id="SSF53383">
    <property type="entry name" value="PLP-dependent transferases"/>
    <property type="match status" value="1"/>
</dbReference>
<keyword id="KW-0032">Aminotransferase</keyword>
<keyword id="KW-0903">Direct protein sequencing</keyword>
<keyword id="KW-0663">Pyridoxal phosphate</keyword>
<keyword id="KW-0808">Transferase</keyword>
<evidence type="ECO:0000250" key="1"/>
<evidence type="ECO:0000305" key="2"/>
<name>ALA2_PANMI</name>
<sequence length="482" mass="52682">MAATVAVENLNPKVLKCEYAVRGEIVIHAQHLQQQLQTQPGSLPFDEILYCNIGNPQSLGQQPVTFFREVLALCDHPCLLEKEETKSLFSADAISRAKQILSTIPGRATGAYSHSQGIKGLRDAIAAGIASRDGFPANADDIFVTDGASPGVHMMMQLLIRNEKDGILCPIPQYPLYSASIALHGGTLVPYYLDEKTGWGLEISDLKKQLEDARSKGIDVRALVVINPGNPTGQVLAEDNQCDIVRFCKNEGLVLLADEVYQENIYVDDKKFNSFKKIARSVGYGEDDLPLVSFQSVSKGYYGECGKRGGYMEITGFSAPVREQIYKIASVNLCSNITGQILASLVMNPPKVGDESYAAYKAEKDGILQSLARRAKALEDAFNNLEGISCNKAEGAMYLFPQIHLPKKAIEAAKAANKAPDAFYALRLLESTGIVVVPGSGFGQVPGTWHIRCTILPQEDKIPAVITRFKAFHEAFMAEYRD</sequence>
<proteinExistence type="evidence at protein level"/>
<feature type="chain" id="PRO_0000123940" description="Alanine aminotransferase 2">
    <location>
        <begin position="1"/>
        <end position="482"/>
    </location>
</feature>
<feature type="modified residue" description="N6-(pyridoxal phosphate)lysine" evidence="1">
    <location>
        <position position="299"/>
    </location>
</feature>
<protein>
    <recommendedName>
        <fullName>Alanine aminotransferase 2</fullName>
        <shortName>ALAAT-2</shortName>
        <ecNumber>2.6.1.2</ecNumber>
    </recommendedName>
    <alternativeName>
        <fullName>Glutamate pyruvate transaminase 2</fullName>
        <shortName>GPT</shortName>
    </alternativeName>
    <alternativeName>
        <fullName>Glutamic--alanine transaminase 2</fullName>
    </alternativeName>
    <alternativeName>
        <fullName>Glutamic--pyruvic transaminase 2</fullName>
    </alternativeName>
</protein>
<organism>
    <name type="scientific">Panicum miliaceum</name>
    <name type="common">Proso millet</name>
    <name type="synonym">Broomcorn millet</name>
    <dbReference type="NCBI Taxonomy" id="4540"/>
    <lineage>
        <taxon>Eukaryota</taxon>
        <taxon>Viridiplantae</taxon>
        <taxon>Streptophyta</taxon>
        <taxon>Embryophyta</taxon>
        <taxon>Tracheophyta</taxon>
        <taxon>Spermatophyta</taxon>
        <taxon>Magnoliopsida</taxon>
        <taxon>Liliopsida</taxon>
        <taxon>Poales</taxon>
        <taxon>Poaceae</taxon>
        <taxon>PACMAD clade</taxon>
        <taxon>Panicoideae</taxon>
        <taxon>Panicodae</taxon>
        <taxon>Paniceae</taxon>
        <taxon>Panicinae</taxon>
        <taxon>Panicum</taxon>
    </lineage>
</organism>